<organism>
    <name type="scientific">Gloydius ussuriensis</name>
    <name type="common">Ussuri mamushi</name>
    <name type="synonym">Gloydius blomhoffii ussuriensis</name>
    <dbReference type="NCBI Taxonomy" id="35671"/>
    <lineage>
        <taxon>Eukaryota</taxon>
        <taxon>Metazoa</taxon>
        <taxon>Chordata</taxon>
        <taxon>Craniata</taxon>
        <taxon>Vertebrata</taxon>
        <taxon>Euteleostomi</taxon>
        <taxon>Lepidosauria</taxon>
        <taxon>Squamata</taxon>
        <taxon>Bifurcata</taxon>
        <taxon>Unidentata</taxon>
        <taxon>Episquamata</taxon>
        <taxon>Toxicofera</taxon>
        <taxon>Serpentes</taxon>
        <taxon>Colubroidea</taxon>
        <taxon>Viperidae</taxon>
        <taxon>Crotalinae</taxon>
        <taxon>Gloydius</taxon>
    </lineage>
</organism>
<keyword id="KW-1015">Disulfide bond</keyword>
<keyword id="KW-0325">Glycoprotein</keyword>
<keyword id="KW-1199">Hemostasis impairing toxin</keyword>
<keyword id="KW-0378">Hydrolase</keyword>
<keyword id="KW-0645">Protease</keyword>
<keyword id="KW-0964">Secreted</keyword>
<keyword id="KW-0720">Serine protease</keyword>
<keyword id="KW-0800">Toxin</keyword>
<feature type="chain" id="PRO_0000295823" description="Snake venom serine protease ussurase">
    <location>
        <begin position="1"/>
        <end position="233"/>
    </location>
</feature>
<feature type="domain" description="Peptidase S1" evidence="3">
    <location>
        <begin position="1"/>
        <end position="224"/>
    </location>
</feature>
<feature type="active site" description="Charge relay system" evidence="1">
    <location>
        <position position="40"/>
    </location>
</feature>
<feature type="active site" description="Charge relay system" evidence="1">
    <location>
        <position position="85"/>
    </location>
</feature>
<feature type="active site" description="Charge relay system" evidence="1">
    <location>
        <position position="179"/>
    </location>
</feature>
<feature type="glycosylation site" description="N-linked (GlcNAc...) asparagine" evidence="2">
    <location>
        <position position="54"/>
    </location>
</feature>
<feature type="disulfide bond" evidence="3">
    <location>
        <begin position="7"/>
        <end position="138"/>
    </location>
</feature>
<feature type="disulfide bond" evidence="3">
    <location>
        <begin position="25"/>
        <end position="41"/>
    </location>
</feature>
<feature type="disulfide bond" evidence="3">
    <location>
        <begin position="73"/>
        <end position="231"/>
    </location>
</feature>
<feature type="disulfide bond" evidence="3">
    <location>
        <begin position="117"/>
        <end position="185"/>
    </location>
</feature>
<feature type="disulfide bond" evidence="3">
    <location>
        <begin position="149"/>
        <end position="164"/>
    </location>
</feature>
<feature type="disulfide bond" evidence="3">
    <location>
        <begin position="175"/>
        <end position="200"/>
    </location>
</feature>
<evidence type="ECO:0000250" key="1"/>
<evidence type="ECO:0000255" key="2"/>
<evidence type="ECO:0000255" key="3">
    <source>
        <dbReference type="PROSITE-ProRule" id="PRU00274"/>
    </source>
</evidence>
<evidence type="ECO:0000305" key="4"/>
<reference key="1">
    <citation type="journal article" date="2001" name="She Zhi">
        <title>Cloning and analysis of cDNA for thrombin-like enzyme, ussurin and ussurase, from Agkistrodon halys ussuriensis snake venom.</title>
        <authorList>
            <person name="Daolin D."/>
            <person name="Xiaodong D."/>
            <person name="Wenfang W."/>
            <person name="Anguo L."/>
            <person name="Mei X."/>
        </authorList>
    </citation>
    <scope>NUCLEOTIDE SEQUENCE [MRNA]</scope>
    <source>
        <tissue>Venom gland</tissue>
    </source>
</reference>
<accession>Q8UUJ1</accession>
<sequence length="233" mass="26017">VIGGVECNINEHGFLALLYSRRFQCGGTLINEEWVLTAAHCDMRNMYIYLGVHNVSVQYDDEQRRYPKKKYFCLSSRNYNQWDKDIMLIRLNRPVRNSAHIAPLSLPSNPPSVGSVCRVMGWGTITSPQETLPDVPHCANINILDYEVCRAAYPELPVTRRTLCAGILEGGKDSCNGDSGGPLICNGQFQGIAYWGADTCAQPREPGLYTKVFDYTDWIQSIISGNTDATCPQ</sequence>
<name>VSPUA_GLOUS</name>
<proteinExistence type="evidence at transcript level"/>
<comment type="function">
    <text evidence="1">Snake venom serine protease that may act in the hemostasis system of the prey.</text>
</comment>
<comment type="subunit">
    <text evidence="1">Monomer.</text>
</comment>
<comment type="subcellular location">
    <subcellularLocation>
        <location evidence="1">Secreted</location>
    </subcellularLocation>
</comment>
<comment type="tissue specificity">
    <text>Expressed by the venom gland.</text>
</comment>
<comment type="similarity">
    <text evidence="3">Belongs to the peptidase S1 family. Snake venom subfamily.</text>
</comment>
<comment type="sequence caution" evidence="4">
    <conflict type="erroneous initiation">
        <sequence resource="EMBL-CDS" id="AAL48222"/>
    </conflict>
</comment>
<dbReference type="EC" id="3.4.21.-"/>
<dbReference type="EMBL" id="AF444251">
    <property type="protein sequence ID" value="AAL48222.1"/>
    <property type="status" value="ALT_INIT"/>
    <property type="molecule type" value="mRNA"/>
</dbReference>
<dbReference type="SMR" id="Q8UUJ1"/>
<dbReference type="MEROPS" id="S01.350"/>
<dbReference type="GO" id="GO:0005576">
    <property type="term" value="C:extracellular region"/>
    <property type="evidence" value="ECO:0007669"/>
    <property type="project" value="UniProtKB-SubCell"/>
</dbReference>
<dbReference type="GO" id="GO:0030141">
    <property type="term" value="C:secretory granule"/>
    <property type="evidence" value="ECO:0007669"/>
    <property type="project" value="TreeGrafter"/>
</dbReference>
<dbReference type="GO" id="GO:0004252">
    <property type="term" value="F:serine-type endopeptidase activity"/>
    <property type="evidence" value="ECO:0007669"/>
    <property type="project" value="InterPro"/>
</dbReference>
<dbReference type="GO" id="GO:0090729">
    <property type="term" value="F:toxin activity"/>
    <property type="evidence" value="ECO:0007669"/>
    <property type="project" value="UniProtKB-KW"/>
</dbReference>
<dbReference type="GO" id="GO:0006508">
    <property type="term" value="P:proteolysis"/>
    <property type="evidence" value="ECO:0007669"/>
    <property type="project" value="UniProtKB-KW"/>
</dbReference>
<dbReference type="CDD" id="cd00190">
    <property type="entry name" value="Tryp_SPc"/>
    <property type="match status" value="1"/>
</dbReference>
<dbReference type="FunFam" id="2.40.10.10:FF:000158">
    <property type="entry name" value="Thrombin-like enzyme saxthrombin"/>
    <property type="match status" value="1"/>
</dbReference>
<dbReference type="FunFam" id="2.40.10.10:FF:000153">
    <property type="entry name" value="Venom plasminogen activator TSV-PA"/>
    <property type="match status" value="1"/>
</dbReference>
<dbReference type="Gene3D" id="2.40.10.10">
    <property type="entry name" value="Trypsin-like serine proteases"/>
    <property type="match status" value="2"/>
</dbReference>
<dbReference type="InterPro" id="IPR009003">
    <property type="entry name" value="Peptidase_S1_PA"/>
</dbReference>
<dbReference type="InterPro" id="IPR043504">
    <property type="entry name" value="Peptidase_S1_PA_chymotrypsin"/>
</dbReference>
<dbReference type="InterPro" id="IPR001314">
    <property type="entry name" value="Peptidase_S1A"/>
</dbReference>
<dbReference type="InterPro" id="IPR001254">
    <property type="entry name" value="Trypsin_dom"/>
</dbReference>
<dbReference type="InterPro" id="IPR018114">
    <property type="entry name" value="TRYPSIN_HIS"/>
</dbReference>
<dbReference type="InterPro" id="IPR033116">
    <property type="entry name" value="TRYPSIN_SER"/>
</dbReference>
<dbReference type="PANTHER" id="PTHR24271:SF47">
    <property type="entry name" value="KALLIKREIN-1"/>
    <property type="match status" value="1"/>
</dbReference>
<dbReference type="PANTHER" id="PTHR24271">
    <property type="entry name" value="KALLIKREIN-RELATED"/>
    <property type="match status" value="1"/>
</dbReference>
<dbReference type="Pfam" id="PF00089">
    <property type="entry name" value="Trypsin"/>
    <property type="match status" value="1"/>
</dbReference>
<dbReference type="PRINTS" id="PR00722">
    <property type="entry name" value="CHYMOTRYPSIN"/>
</dbReference>
<dbReference type="SMART" id="SM00020">
    <property type="entry name" value="Tryp_SPc"/>
    <property type="match status" value="1"/>
</dbReference>
<dbReference type="SUPFAM" id="SSF50494">
    <property type="entry name" value="Trypsin-like serine proteases"/>
    <property type="match status" value="1"/>
</dbReference>
<dbReference type="PROSITE" id="PS50240">
    <property type="entry name" value="TRYPSIN_DOM"/>
    <property type="match status" value="1"/>
</dbReference>
<dbReference type="PROSITE" id="PS00134">
    <property type="entry name" value="TRYPSIN_HIS"/>
    <property type="match status" value="1"/>
</dbReference>
<dbReference type="PROSITE" id="PS00135">
    <property type="entry name" value="TRYPSIN_SER"/>
    <property type="match status" value="1"/>
</dbReference>
<protein>
    <recommendedName>
        <fullName>Snake venom serine protease ussurase</fullName>
        <shortName>SVSP</shortName>
        <ecNumber>3.4.21.-</ecNumber>
    </recommendedName>
</protein>